<feature type="chain" id="PRO_1000045056" description="Probable Fe(2+)-trafficking protein">
    <location>
        <begin position="1"/>
        <end position="90"/>
    </location>
</feature>
<protein>
    <recommendedName>
        <fullName evidence="1">Probable Fe(2+)-trafficking protein</fullName>
    </recommendedName>
</protein>
<evidence type="ECO:0000255" key="1">
    <source>
        <dbReference type="HAMAP-Rule" id="MF_00686"/>
    </source>
</evidence>
<keyword id="KW-0408">Iron</keyword>
<dbReference type="EMBL" id="CP000712">
    <property type="protein sequence ID" value="ABQ76478.1"/>
    <property type="molecule type" value="Genomic_DNA"/>
</dbReference>
<dbReference type="SMR" id="A5VX68"/>
<dbReference type="KEGG" id="ppf:Pput_0305"/>
<dbReference type="eggNOG" id="COG2924">
    <property type="taxonomic scope" value="Bacteria"/>
</dbReference>
<dbReference type="HOGENOM" id="CLU_170994_0_0_6"/>
<dbReference type="GO" id="GO:0005829">
    <property type="term" value="C:cytosol"/>
    <property type="evidence" value="ECO:0007669"/>
    <property type="project" value="TreeGrafter"/>
</dbReference>
<dbReference type="GO" id="GO:0005506">
    <property type="term" value="F:iron ion binding"/>
    <property type="evidence" value="ECO:0007669"/>
    <property type="project" value="UniProtKB-UniRule"/>
</dbReference>
<dbReference type="GO" id="GO:0034599">
    <property type="term" value="P:cellular response to oxidative stress"/>
    <property type="evidence" value="ECO:0007669"/>
    <property type="project" value="TreeGrafter"/>
</dbReference>
<dbReference type="FunFam" id="1.10.3880.10:FF:000001">
    <property type="entry name" value="Probable Fe(2+)-trafficking protein"/>
    <property type="match status" value="1"/>
</dbReference>
<dbReference type="Gene3D" id="1.10.3880.10">
    <property type="entry name" value="Fe(II) trafficking protein YggX"/>
    <property type="match status" value="1"/>
</dbReference>
<dbReference type="HAMAP" id="MF_00686">
    <property type="entry name" value="Fe_traffic_YggX"/>
    <property type="match status" value="1"/>
</dbReference>
<dbReference type="InterPro" id="IPR007457">
    <property type="entry name" value="Fe_traffick_prot_YggX"/>
</dbReference>
<dbReference type="InterPro" id="IPR036766">
    <property type="entry name" value="Fe_traffick_prot_YggX_sf"/>
</dbReference>
<dbReference type="NCBIfam" id="NF003817">
    <property type="entry name" value="PRK05408.1"/>
    <property type="match status" value="1"/>
</dbReference>
<dbReference type="PANTHER" id="PTHR36965">
    <property type="entry name" value="FE(2+)-TRAFFICKING PROTEIN-RELATED"/>
    <property type="match status" value="1"/>
</dbReference>
<dbReference type="PANTHER" id="PTHR36965:SF1">
    <property type="entry name" value="FE(2+)-TRAFFICKING PROTEIN-RELATED"/>
    <property type="match status" value="1"/>
</dbReference>
<dbReference type="Pfam" id="PF04362">
    <property type="entry name" value="Iron_traffic"/>
    <property type="match status" value="1"/>
</dbReference>
<dbReference type="PIRSF" id="PIRSF029827">
    <property type="entry name" value="Fe_traffic_YggX"/>
    <property type="match status" value="1"/>
</dbReference>
<dbReference type="SUPFAM" id="SSF111148">
    <property type="entry name" value="YggX-like"/>
    <property type="match status" value="1"/>
</dbReference>
<reference key="1">
    <citation type="submission" date="2007-05" db="EMBL/GenBank/DDBJ databases">
        <title>Complete sequence of Pseudomonas putida F1.</title>
        <authorList>
            <consortium name="US DOE Joint Genome Institute"/>
            <person name="Copeland A."/>
            <person name="Lucas S."/>
            <person name="Lapidus A."/>
            <person name="Barry K."/>
            <person name="Detter J.C."/>
            <person name="Glavina del Rio T."/>
            <person name="Hammon N."/>
            <person name="Israni S."/>
            <person name="Dalin E."/>
            <person name="Tice H."/>
            <person name="Pitluck S."/>
            <person name="Chain P."/>
            <person name="Malfatti S."/>
            <person name="Shin M."/>
            <person name="Vergez L."/>
            <person name="Schmutz J."/>
            <person name="Larimer F."/>
            <person name="Land M."/>
            <person name="Hauser L."/>
            <person name="Kyrpides N."/>
            <person name="Lykidis A."/>
            <person name="Parales R."/>
            <person name="Richardson P."/>
        </authorList>
    </citation>
    <scope>NUCLEOTIDE SEQUENCE [LARGE SCALE GENOMIC DNA]</scope>
    <source>
        <strain>ATCC 700007 / DSM 6899 / JCM 31910 / BCRC 17059 / LMG 24140 / F1</strain>
    </source>
</reference>
<gene>
    <name type="ordered locus">Pput_0305</name>
</gene>
<sequence>MTRTVMCRKYQEELPGLERPPYPGAKGQDIFEHISQKAWADWQKHQTMLINEKRLNMMNAEDRKFLQAEMDKFFAGEEYAQAEGYVPPAE</sequence>
<comment type="function">
    <text evidence="1">Could be a mediator in iron transactions between iron acquisition and iron-requiring processes, such as synthesis and/or repair of Fe-S clusters in biosynthetic enzymes.</text>
</comment>
<comment type="similarity">
    <text evidence="1">Belongs to the Fe(2+)-trafficking protein family.</text>
</comment>
<name>FETP_PSEP1</name>
<proteinExistence type="inferred from homology"/>
<accession>A5VX68</accession>
<organism>
    <name type="scientific">Pseudomonas putida (strain ATCC 700007 / DSM 6899 / JCM 31910 / BCRC 17059 / LMG 24140 / F1)</name>
    <dbReference type="NCBI Taxonomy" id="351746"/>
    <lineage>
        <taxon>Bacteria</taxon>
        <taxon>Pseudomonadati</taxon>
        <taxon>Pseudomonadota</taxon>
        <taxon>Gammaproteobacteria</taxon>
        <taxon>Pseudomonadales</taxon>
        <taxon>Pseudomonadaceae</taxon>
        <taxon>Pseudomonas</taxon>
    </lineage>
</organism>